<accession>P34018</accession>
<protein>
    <recommendedName>
        <fullName>Protein OPG035</fullName>
    </recommendedName>
    <alternativeName>
        <fullName>Protein N1</fullName>
    </alternativeName>
</protein>
<reference key="1">
    <citation type="journal article" date="1993" name="FEBS Lett.">
        <title>Genes of variola and vaccinia viruses necessary to overcome the host protective mechanisms.</title>
        <authorList>
            <person name="Shchelkunov S.N."/>
            <person name="Blinov V.M."/>
            <person name="Sandakhchiev L.S."/>
        </authorList>
    </citation>
    <scope>NUCLEOTIDE SEQUENCE [GENOMIC DNA]</scope>
    <source>
        <strain>India-1967 / Isolate Ind3</strain>
    </source>
</reference>
<reference key="2">
    <citation type="submission" date="1994-12" db="EMBL/GenBank/DDBJ databases">
        <authorList>
            <person name="Massung R.F."/>
            <person name="Loparev V.N."/>
            <person name="Knight J.C."/>
            <person name="Chizhikov V.E."/>
            <person name="Parsons J.M."/>
            <person name="Totmenin A.V."/>
            <person name="Shchelkunov S.N."/>
            <person name="Esposito J.J."/>
        </authorList>
    </citation>
    <scope>NUCLEOTIDE SEQUENCE [GENOMIC DNA]</scope>
    <source>
        <strain>Garcia-1966</strain>
    </source>
</reference>
<name>PG035_VAR67</name>
<dbReference type="EMBL" id="X69198">
    <property type="protein sequence ID" value="CAA48957.1"/>
    <property type="molecule type" value="Genomic_DNA"/>
</dbReference>
<dbReference type="EMBL" id="U18338">
    <property type="protein sequence ID" value="AAA69362.1"/>
    <property type="molecule type" value="Genomic_DNA"/>
</dbReference>
<dbReference type="PIR" id="F36838">
    <property type="entry name" value="F36838"/>
</dbReference>
<dbReference type="PIR" id="F72152">
    <property type="entry name" value="F72152"/>
</dbReference>
<dbReference type="RefSeq" id="NP_042060.1">
    <property type="nucleotide sequence ID" value="NC_001611.1"/>
</dbReference>
<dbReference type="PDB" id="8XY3">
    <property type="method" value="X-ray"/>
    <property type="resolution" value="2.20 A"/>
    <property type="chains" value="A/B/C/D=1-117"/>
</dbReference>
<dbReference type="PDBsum" id="8XY3"/>
<dbReference type="SMR" id="P34018"/>
<dbReference type="GeneID" id="1486481"/>
<dbReference type="KEGG" id="vg:1486481"/>
<dbReference type="Proteomes" id="UP000002060">
    <property type="component" value="Segment"/>
</dbReference>
<dbReference type="GO" id="GO:0052150">
    <property type="term" value="P:symbiont-mediated perturbation of host apoptosis"/>
    <property type="evidence" value="ECO:0007669"/>
    <property type="project" value="UniProtKB-KW"/>
</dbReference>
<dbReference type="GO" id="GO:0052031">
    <property type="term" value="P:symbiont-mediated perturbation of host defense response"/>
    <property type="evidence" value="ECO:0007669"/>
    <property type="project" value="InterPro"/>
</dbReference>
<dbReference type="GO" id="GO:0085034">
    <property type="term" value="P:symbiont-mediated suppression of host NF-kappaB cascade"/>
    <property type="evidence" value="ECO:0007669"/>
    <property type="project" value="UniProtKB-KW"/>
</dbReference>
<dbReference type="Gene3D" id="1.10.437.20">
    <property type="entry name" value="dsDNA poxvirus"/>
    <property type="match status" value="1"/>
</dbReference>
<dbReference type="InterPro" id="IPR009353">
    <property type="entry name" value="Orthopox_N1"/>
</dbReference>
<dbReference type="InterPro" id="IPR022819">
    <property type="entry name" value="Poxvirus_Bcl-2-like"/>
</dbReference>
<dbReference type="InterPro" id="IPR043018">
    <property type="entry name" value="Poxvirus_sf"/>
</dbReference>
<dbReference type="Pfam" id="PF06227">
    <property type="entry name" value="Poxv_Bcl-2-like"/>
    <property type="match status" value="1"/>
</dbReference>
<dbReference type="PIRSF" id="PIRSF003784">
    <property type="entry name" value="VAC_N1L"/>
    <property type="match status" value="1"/>
</dbReference>
<organismHost>
    <name type="scientific">Homo sapiens</name>
    <name type="common">Human</name>
    <dbReference type="NCBI Taxonomy" id="9606"/>
</organismHost>
<organism>
    <name type="scientific">Variola virus (isolate Human/India/Ind3/1967)</name>
    <name type="common">VARV</name>
    <name type="synonym">Smallpox virus</name>
    <dbReference type="NCBI Taxonomy" id="587200"/>
    <lineage>
        <taxon>Viruses</taxon>
        <taxon>Varidnaviria</taxon>
        <taxon>Bamfordvirae</taxon>
        <taxon>Nucleocytoviricota</taxon>
        <taxon>Pokkesviricetes</taxon>
        <taxon>Chitovirales</taxon>
        <taxon>Poxviridae</taxon>
        <taxon>Chordopoxvirinae</taxon>
        <taxon>Orthopoxvirus</taxon>
        <taxon>Variola virus</taxon>
    </lineage>
</organism>
<sequence length="117" mass="13915">MRTLLIRYILWRNDGDPSYYNDDFEKLMLLDELVDDSDVCTLIKNMRMTLSDGPLLDRLNQPVNNVEDVKRMIAISAKVARDIGERPEIRWEESFTILFRMIETYFDDLMIDLYGEK</sequence>
<keyword id="KW-0002">3D-structure</keyword>
<keyword id="KW-0244">Early protein</keyword>
<keyword id="KW-0945">Host-virus interaction</keyword>
<keyword id="KW-1100">Inhibition of host NF-kappa-B by virus</keyword>
<keyword id="KW-1119">Modulation of host cell apoptosis by virus</keyword>
<keyword id="KW-1185">Reference proteome</keyword>
<keyword id="KW-0899">Viral immunoevasion</keyword>
<feature type="chain" id="PRO_0000099634" description="Protein OPG035">
    <location>
        <begin position="1"/>
        <end position="117"/>
    </location>
</feature>
<evidence type="ECO:0000250" key="1">
    <source>
        <dbReference type="UniProtKB" id="P17361"/>
    </source>
</evidence>
<evidence type="ECO:0000305" key="2"/>
<gene>
    <name type="primary">OPG035</name>
    <name type="synonym">N1L</name>
    <name type="synonym">P1L</name>
    <name type="synonym">R1L</name>
</gene>
<proteinExistence type="evidence at protein level"/>
<comment type="function">
    <text evidence="1">Bcl-2-like protein which contributes to virulence by preventing host NF-kappa-B activation in response to pro-inflammatory stimuli such as TNF-alpha or IL1B.</text>
</comment>
<comment type="induction">
    <text evidence="1">Expressed in the early phase of the viral replicative cycle.</text>
</comment>
<comment type="similarity">
    <text evidence="2">Belongs to the poxviridae OPG035 family.</text>
</comment>